<feature type="chain" id="PRO_0000202173" description="Uncharacterized protein TP_0010">
    <location>
        <begin position="1"/>
        <end position="41"/>
    </location>
</feature>
<protein>
    <recommendedName>
        <fullName>Uncharacterized protein TP_0010</fullName>
    </recommendedName>
</protein>
<gene>
    <name type="ordered locus">TP_0010</name>
</gene>
<dbReference type="EMBL" id="AE000520">
    <property type="protein sequence ID" value="AAC65011.1"/>
    <property type="molecule type" value="Genomic_DNA"/>
</dbReference>
<dbReference type="PIR" id="G71376">
    <property type="entry name" value="G71376"/>
</dbReference>
<dbReference type="SMR" id="O83054"/>
<dbReference type="STRING" id="243276.TP_0010"/>
<dbReference type="EnsemblBacteria" id="AAC65011">
    <property type="protein sequence ID" value="AAC65011"/>
    <property type="gene ID" value="TP_0010"/>
</dbReference>
<dbReference type="KEGG" id="tpa:TP_0010"/>
<dbReference type="HOGENOM" id="CLU_3278190_0_0_12"/>
<dbReference type="Proteomes" id="UP000000811">
    <property type="component" value="Chromosome"/>
</dbReference>
<keyword id="KW-1185">Reference proteome</keyword>
<reference key="1">
    <citation type="journal article" date="1998" name="Science">
        <title>Complete genome sequence of Treponema pallidum, the syphilis spirochete.</title>
        <authorList>
            <person name="Fraser C.M."/>
            <person name="Norris S.J."/>
            <person name="Weinstock G.M."/>
            <person name="White O."/>
            <person name="Sutton G.G."/>
            <person name="Dodson R.J."/>
            <person name="Gwinn M.L."/>
            <person name="Hickey E.K."/>
            <person name="Clayton R.A."/>
            <person name="Ketchum K.A."/>
            <person name="Sodergren E."/>
            <person name="Hardham J.M."/>
            <person name="McLeod M.P."/>
            <person name="Salzberg S.L."/>
            <person name="Peterson J.D."/>
            <person name="Khalak H.G."/>
            <person name="Richardson D.L."/>
            <person name="Howell J.K."/>
            <person name="Chidambaram M."/>
            <person name="Utterback T.R."/>
            <person name="McDonald L.A."/>
            <person name="Artiach P."/>
            <person name="Bowman C."/>
            <person name="Cotton M.D."/>
            <person name="Fujii C."/>
            <person name="Garland S.A."/>
            <person name="Hatch B."/>
            <person name="Horst K."/>
            <person name="Roberts K.M."/>
            <person name="Sandusky M."/>
            <person name="Weidman J.F."/>
            <person name="Smith H.O."/>
            <person name="Venter J.C."/>
        </authorList>
    </citation>
    <scope>NUCLEOTIDE SEQUENCE [LARGE SCALE GENOMIC DNA]</scope>
    <source>
        <strain>Nichols</strain>
    </source>
</reference>
<organism>
    <name type="scientific">Treponema pallidum (strain Nichols)</name>
    <dbReference type="NCBI Taxonomy" id="243276"/>
    <lineage>
        <taxon>Bacteria</taxon>
        <taxon>Pseudomonadati</taxon>
        <taxon>Spirochaetota</taxon>
        <taxon>Spirochaetia</taxon>
        <taxon>Spirochaetales</taxon>
        <taxon>Treponemataceae</taxon>
        <taxon>Treponema</taxon>
    </lineage>
</organism>
<sequence>MGGKKSHFLGRRIEGTGRGVVPFVRKLSEVVKKITADGKKC</sequence>
<accession>O83054</accession>
<proteinExistence type="predicted"/>
<name>Y010_TREPA</name>